<dbReference type="EMBL" id="AF110399">
    <property type="protein sequence ID" value="AAD20224.1"/>
    <property type="molecule type" value="mRNA"/>
</dbReference>
<dbReference type="EMBL" id="AK304621">
    <property type="protein sequence ID" value="BAG65403.1"/>
    <property type="molecule type" value="mRNA"/>
</dbReference>
<dbReference type="EMBL" id="AK308981">
    <property type="status" value="NOT_ANNOTATED_CDS"/>
    <property type="molecule type" value="mRNA"/>
</dbReference>
<dbReference type="EMBL" id="AC025165">
    <property type="status" value="NOT_ANNOTATED_CDS"/>
    <property type="molecule type" value="Genomic_DNA"/>
</dbReference>
<dbReference type="EMBL" id="CH471054">
    <property type="protein sequence ID" value="EAW97075.1"/>
    <property type="molecule type" value="Genomic_DNA"/>
</dbReference>
<dbReference type="EMBL" id="BC022862">
    <property type="protein sequence ID" value="AAH22862.1"/>
    <property type="molecule type" value="mRNA"/>
</dbReference>
<dbReference type="EMBL" id="BC093068">
    <property type="protein sequence ID" value="AAH93068.1"/>
    <property type="molecule type" value="mRNA"/>
</dbReference>
<dbReference type="EMBL" id="L37936">
    <property type="protein sequence ID" value="AAC37577.1"/>
    <property type="molecule type" value="mRNA"/>
</dbReference>
<dbReference type="CCDS" id="CCDS53809.1">
    <molecule id="P43897-2"/>
</dbReference>
<dbReference type="CCDS" id="CCDS53810.1">
    <molecule id="P43897-4"/>
</dbReference>
<dbReference type="CCDS" id="CCDS53811.1">
    <molecule id="P43897-3"/>
</dbReference>
<dbReference type="CCDS" id="CCDS8958.2">
    <molecule id="P43897-1"/>
</dbReference>
<dbReference type="PIR" id="I84606">
    <property type="entry name" value="I84606"/>
</dbReference>
<dbReference type="RefSeq" id="NP_001166166.1">
    <molecule id="P43897-3"/>
    <property type="nucleotide sequence ID" value="NM_001172695.2"/>
</dbReference>
<dbReference type="RefSeq" id="NP_001166167.1">
    <molecule id="P43897-2"/>
    <property type="nucleotide sequence ID" value="NM_001172696.2"/>
</dbReference>
<dbReference type="RefSeq" id="NP_001166168.1">
    <molecule id="P43897-4"/>
    <property type="nucleotide sequence ID" value="NM_001172697.2"/>
</dbReference>
<dbReference type="RefSeq" id="NP_005717.3">
    <molecule id="P43897-1"/>
    <property type="nucleotide sequence ID" value="NM_005726.5"/>
</dbReference>
<dbReference type="PDB" id="2CP9">
    <property type="method" value="NMR"/>
    <property type="chains" value="A=45-95"/>
</dbReference>
<dbReference type="PDBsum" id="2CP9"/>
<dbReference type="SMR" id="P43897"/>
<dbReference type="BioGRID" id="115409">
    <property type="interactions" value="406"/>
</dbReference>
<dbReference type="FunCoup" id="P43897">
    <property type="interactions" value="2972"/>
</dbReference>
<dbReference type="IntAct" id="P43897">
    <property type="interactions" value="61"/>
</dbReference>
<dbReference type="MINT" id="P43897"/>
<dbReference type="STRING" id="9606.ENSP00000313877"/>
<dbReference type="GlyGen" id="P43897">
    <property type="glycosylation" value="1 site, 1 O-linked glycan (1 site)"/>
</dbReference>
<dbReference type="iPTMnet" id="P43897"/>
<dbReference type="MetOSite" id="P43897"/>
<dbReference type="PhosphoSitePlus" id="P43897"/>
<dbReference type="SwissPalm" id="P43897"/>
<dbReference type="BioMuta" id="TSFM"/>
<dbReference type="DMDM" id="12644268"/>
<dbReference type="jPOST" id="P43897"/>
<dbReference type="MassIVE" id="P43897"/>
<dbReference type="PaxDb" id="9606-ENSP00000313877"/>
<dbReference type="PeptideAtlas" id="P43897"/>
<dbReference type="ProteomicsDB" id="26068"/>
<dbReference type="ProteomicsDB" id="55655">
    <molecule id="P43897-1"/>
</dbReference>
<dbReference type="ProteomicsDB" id="55656">
    <molecule id="P43897-2"/>
</dbReference>
<dbReference type="ProteomicsDB" id="55657">
    <molecule id="P43897-3"/>
</dbReference>
<dbReference type="Pumba" id="P43897"/>
<dbReference type="Antibodypedia" id="1781">
    <property type="antibodies" value="158 antibodies from 27 providers"/>
</dbReference>
<dbReference type="DNASU" id="10102"/>
<dbReference type="Ensembl" id="ENST00000323833.12">
    <molecule id="P43897-2"/>
    <property type="protein sequence ID" value="ENSP00000313877.8"/>
    <property type="gene ID" value="ENSG00000123297.20"/>
</dbReference>
<dbReference type="Ensembl" id="ENST00000540550.6">
    <molecule id="P43897-3"/>
    <property type="protein sequence ID" value="ENSP00000440987.1"/>
    <property type="gene ID" value="ENSG00000123297.20"/>
</dbReference>
<dbReference type="Ensembl" id="ENST00000543727.5">
    <molecule id="P43897-4"/>
    <property type="protein sequence ID" value="ENSP00000439342.1"/>
    <property type="gene ID" value="ENSG00000123297.20"/>
</dbReference>
<dbReference type="Ensembl" id="ENST00000652027.2">
    <molecule id="P43897-1"/>
    <property type="protein sequence ID" value="ENSP00000499171.2"/>
    <property type="gene ID" value="ENSG00000123297.20"/>
</dbReference>
<dbReference type="GeneID" id="10102"/>
<dbReference type="KEGG" id="hsa:10102"/>
<dbReference type="MANE-Select" id="ENST00000652027.2">
    <property type="protein sequence ID" value="ENSP00000499171.2"/>
    <property type="RefSeq nucleotide sequence ID" value="NM_005726.6"/>
    <property type="RefSeq protein sequence ID" value="NP_005717.3"/>
</dbReference>
<dbReference type="UCSC" id="uc001sqh.4">
    <molecule id="P43897-1"/>
    <property type="organism name" value="human"/>
</dbReference>
<dbReference type="AGR" id="HGNC:12367"/>
<dbReference type="CTD" id="10102"/>
<dbReference type="DisGeNET" id="10102"/>
<dbReference type="GeneCards" id="TSFM"/>
<dbReference type="HGNC" id="HGNC:12367">
    <property type="gene designation" value="TSFM"/>
</dbReference>
<dbReference type="HPA" id="ENSG00000123297">
    <property type="expression patterns" value="Low tissue specificity"/>
</dbReference>
<dbReference type="MalaCards" id="TSFM"/>
<dbReference type="MIM" id="604723">
    <property type="type" value="gene"/>
</dbReference>
<dbReference type="MIM" id="610505">
    <property type="type" value="phenotype"/>
</dbReference>
<dbReference type="neXtProt" id="NX_P43897"/>
<dbReference type="OpenTargets" id="ENSG00000123297"/>
<dbReference type="Orphanet" id="168566">
    <property type="disease" value="Fatal mitochondrial disease due to combined oxidative phosphorylation defect type 3"/>
</dbReference>
<dbReference type="PharmGKB" id="PA37037"/>
<dbReference type="VEuPathDB" id="HostDB:ENSG00000123297"/>
<dbReference type="eggNOG" id="KOG1071">
    <property type="taxonomic scope" value="Eukaryota"/>
</dbReference>
<dbReference type="GeneTree" id="ENSGT00390000016293"/>
<dbReference type="HOGENOM" id="CLU_047155_4_0_1"/>
<dbReference type="InParanoid" id="P43897"/>
<dbReference type="OMA" id="QEYMLDD"/>
<dbReference type="OrthoDB" id="277235at2759"/>
<dbReference type="PAN-GO" id="P43897">
    <property type="GO annotations" value="3 GO annotations based on evolutionary models"/>
</dbReference>
<dbReference type="PhylomeDB" id="P43897"/>
<dbReference type="TreeFam" id="TF314154"/>
<dbReference type="PathwayCommons" id="P43897"/>
<dbReference type="Reactome" id="R-HSA-5389840">
    <property type="pathway name" value="Mitochondrial translation elongation"/>
</dbReference>
<dbReference type="SignaLink" id="P43897"/>
<dbReference type="BioGRID-ORCS" id="10102">
    <property type="hits" value="396 hits in 1167 CRISPR screens"/>
</dbReference>
<dbReference type="CD-CODE" id="91857CE7">
    <property type="entry name" value="Nucleolus"/>
</dbReference>
<dbReference type="ChiTaRS" id="TSFM">
    <property type="organism name" value="human"/>
</dbReference>
<dbReference type="EvolutionaryTrace" id="P43897"/>
<dbReference type="GeneWiki" id="TSFM"/>
<dbReference type="GenomeRNAi" id="10102"/>
<dbReference type="Pharos" id="P43897">
    <property type="development level" value="Tbio"/>
</dbReference>
<dbReference type="PRO" id="PR:P43897"/>
<dbReference type="Proteomes" id="UP000005640">
    <property type="component" value="Chromosome 12"/>
</dbReference>
<dbReference type="RNAct" id="P43897">
    <property type="molecule type" value="protein"/>
</dbReference>
<dbReference type="Bgee" id="ENSG00000123297">
    <property type="expression patterns" value="Expressed in right adrenal gland and 102 other cell types or tissues"/>
</dbReference>
<dbReference type="ExpressionAtlas" id="P43897">
    <property type="expression patterns" value="baseline and differential"/>
</dbReference>
<dbReference type="GO" id="GO:0005739">
    <property type="term" value="C:mitochondrion"/>
    <property type="evidence" value="ECO:0000314"/>
    <property type="project" value="HPA"/>
</dbReference>
<dbReference type="GO" id="GO:0005654">
    <property type="term" value="C:nucleoplasm"/>
    <property type="evidence" value="ECO:0000314"/>
    <property type="project" value="HPA"/>
</dbReference>
<dbReference type="GO" id="GO:0003723">
    <property type="term" value="F:RNA binding"/>
    <property type="evidence" value="ECO:0007005"/>
    <property type="project" value="UniProtKB"/>
</dbReference>
<dbReference type="GO" id="GO:0003746">
    <property type="term" value="F:translation elongation factor activity"/>
    <property type="evidence" value="ECO:0000318"/>
    <property type="project" value="GO_Central"/>
</dbReference>
<dbReference type="GO" id="GO:0070125">
    <property type="term" value="P:mitochondrial translational elongation"/>
    <property type="evidence" value="ECO:0000318"/>
    <property type="project" value="GO_Central"/>
</dbReference>
<dbReference type="GO" id="GO:0032784">
    <property type="term" value="P:regulation of DNA-templated transcription elongation"/>
    <property type="evidence" value="ECO:0000304"/>
    <property type="project" value="ProtInc"/>
</dbReference>
<dbReference type="GO" id="GO:0070129">
    <property type="term" value="P:regulation of mitochondrial translation"/>
    <property type="evidence" value="ECO:0000314"/>
    <property type="project" value="UniProtKB"/>
</dbReference>
<dbReference type="GO" id="GO:0006414">
    <property type="term" value="P:translational elongation"/>
    <property type="evidence" value="ECO:0000304"/>
    <property type="project" value="ProtInc"/>
</dbReference>
<dbReference type="CDD" id="cd14275">
    <property type="entry name" value="UBA_EF-Ts"/>
    <property type="match status" value="1"/>
</dbReference>
<dbReference type="FunFam" id="1.10.8.10:FF:000031">
    <property type="entry name" value="Elongation factor Ts, mitochondrial"/>
    <property type="match status" value="1"/>
</dbReference>
<dbReference type="FunFam" id="3.30.479.20:FF:000007">
    <property type="entry name" value="Elongation factor Ts, mitochondrial"/>
    <property type="match status" value="1"/>
</dbReference>
<dbReference type="FunFam" id="3.30.479.20:FF:000008">
    <property type="entry name" value="Elongation factor Ts, mitochondrial"/>
    <property type="match status" value="1"/>
</dbReference>
<dbReference type="Gene3D" id="1.10.8.10">
    <property type="entry name" value="DNA helicase RuvA subunit, C-terminal domain"/>
    <property type="match status" value="1"/>
</dbReference>
<dbReference type="Gene3D" id="3.30.479.20">
    <property type="entry name" value="Elongation factor Ts, dimerisation domain"/>
    <property type="match status" value="2"/>
</dbReference>
<dbReference type="HAMAP" id="MF_00050">
    <property type="entry name" value="EF_Ts"/>
    <property type="match status" value="1"/>
</dbReference>
<dbReference type="InterPro" id="IPR036402">
    <property type="entry name" value="EF-Ts_dimer_sf"/>
</dbReference>
<dbReference type="InterPro" id="IPR001816">
    <property type="entry name" value="Transl_elong_EFTs/EF1B"/>
</dbReference>
<dbReference type="InterPro" id="IPR014039">
    <property type="entry name" value="Transl_elong_EFTs/EF1B_dimer"/>
</dbReference>
<dbReference type="InterPro" id="IPR018101">
    <property type="entry name" value="Transl_elong_Ts_CS"/>
</dbReference>
<dbReference type="InterPro" id="IPR009060">
    <property type="entry name" value="UBA-like_sf"/>
</dbReference>
<dbReference type="PANTHER" id="PTHR11741">
    <property type="entry name" value="ELONGATION FACTOR TS"/>
    <property type="match status" value="1"/>
</dbReference>
<dbReference type="PANTHER" id="PTHR11741:SF0">
    <property type="entry name" value="ELONGATION FACTOR TS, MITOCHONDRIAL"/>
    <property type="match status" value="1"/>
</dbReference>
<dbReference type="Pfam" id="PF25025">
    <property type="entry name" value="EF-Ts_N"/>
    <property type="match status" value="1"/>
</dbReference>
<dbReference type="Pfam" id="PF00889">
    <property type="entry name" value="EF_TS"/>
    <property type="match status" value="1"/>
</dbReference>
<dbReference type="SUPFAM" id="SSF54713">
    <property type="entry name" value="Elongation factor Ts (EF-Ts), dimerisation domain"/>
    <property type="match status" value="2"/>
</dbReference>
<dbReference type="SUPFAM" id="SSF46934">
    <property type="entry name" value="UBA-like"/>
    <property type="match status" value="1"/>
</dbReference>
<dbReference type="PROSITE" id="PS01126">
    <property type="entry name" value="EF_TS_1"/>
    <property type="match status" value="1"/>
</dbReference>
<dbReference type="PROSITE" id="PS01127">
    <property type="entry name" value="EF_TS_2"/>
    <property type="match status" value="1"/>
</dbReference>
<name>EFTS_HUMAN</name>
<comment type="function">
    <text evidence="2 5">Associates with the EF-Tu.GDP complex and induces the exchange of GDP to GTP. It remains bound to the aminoacyl-tRNA.EF-Tu.GTP complex up to the GTP hydrolysis stage on the ribosome.</text>
</comment>
<comment type="interaction">
    <interactant intactId="EBI-1049298">
        <id>P43897</id>
    </interactant>
    <interactant intactId="EBI-12814117">
        <id>Q8N998</id>
        <label>CCDC89</label>
    </interactant>
    <organismsDiffer>false</organismsDiffer>
    <experiments>3</experiments>
</comment>
<comment type="interaction">
    <interactant intactId="EBI-1049298">
        <id>P43897</id>
    </interactant>
    <interactant intactId="EBI-739624">
        <id>Q8NHQ1</id>
        <label>CEP70</label>
    </interactant>
    <organismsDiffer>false</organismsDiffer>
    <experiments>4</experiments>
</comment>
<comment type="interaction">
    <interactant intactId="EBI-1049298">
        <id>P43897</id>
    </interactant>
    <interactant intactId="EBI-2689453">
        <id>Q6PUV4</id>
        <label>CPLX2</label>
    </interactant>
    <organismsDiffer>false</organismsDiffer>
    <experiments>3</experiments>
</comment>
<comment type="interaction">
    <interactant intactId="EBI-1049298">
        <id>P43897</id>
    </interactant>
    <interactant intactId="EBI-1052570">
        <id>O95995</id>
        <label>GAS8</label>
    </interactant>
    <organismsDiffer>false</organismsDiffer>
    <experiments>3</experiments>
</comment>
<comment type="interaction">
    <interactant intactId="EBI-1049298">
        <id>P43897</id>
    </interactant>
    <interactant intactId="EBI-5916454">
        <id>A6NEM1</id>
        <label>GOLGA6L9</label>
    </interactant>
    <organismsDiffer>false</organismsDiffer>
    <experiments>3</experiments>
</comment>
<comment type="interaction">
    <interactant intactId="EBI-1049298">
        <id>P43897</id>
    </interactant>
    <interactant intactId="EBI-11959885">
        <id>Q07627</id>
        <label>KRTAP1-1</label>
    </interactant>
    <organismsDiffer>false</organismsDiffer>
    <experiments>3</experiments>
</comment>
<comment type="interaction">
    <interactant intactId="EBI-1049298">
        <id>P43897</id>
    </interactant>
    <interactant intactId="EBI-724076">
        <id>Q99750</id>
        <label>MDFI</label>
    </interactant>
    <organismsDiffer>false</organismsDiffer>
    <experiments>3</experiments>
</comment>
<comment type="interaction">
    <interactant intactId="EBI-1049298">
        <id>P43897</id>
    </interactant>
    <interactant intactId="EBI-749285">
        <id>Q15311</id>
        <label>RALBP1</label>
    </interactant>
    <organismsDiffer>false</organismsDiffer>
    <experiments>4</experiments>
</comment>
<comment type="subcellular location">
    <subcellularLocation>
        <location>Mitochondrion</location>
    </subcellularLocation>
</comment>
<comment type="alternative products">
    <event type="alternative splicing"/>
    <isoform>
        <id>P43897-1</id>
        <name>1</name>
        <sequence type="displayed"/>
    </isoform>
    <isoform>
        <id>P43897-2</id>
        <name>2</name>
        <sequence type="described" ref="VSP_001364"/>
    </isoform>
    <isoform>
        <id>P43897-3</id>
        <name>3</name>
        <sequence type="described" ref="VSP_043517 VSP_043518"/>
    </isoform>
    <isoform>
        <id>P43897-4</id>
        <name>4</name>
        <sequence type="described" ref="VSP_045283 VSP_045284"/>
    </isoform>
</comment>
<comment type="tissue specificity">
    <text>Expressed in all tissues, with the highest levels of expression in skeletal muscle, liver and kidney.</text>
</comment>
<comment type="disease" evidence="3 4 5">
    <disease id="DI-01366">
        <name>Combined oxidative phosphorylation deficiency 3</name>
        <acronym>COXPD3</acronym>
        <description>A mitochondrial disease resulting in severe metabolic acidosis with encephalomyopathy or with hypertrophic cardiomyopathy. Patients show a severe defect in mitochondrial translation leading to a failure to assemble adequate amounts of three of the oxidative phosphorylation complexes.</description>
        <dbReference type="MIM" id="610505"/>
    </disease>
    <text>The disease is caused by variants affecting the gene represented in this entry.</text>
</comment>
<comment type="similarity">
    <text evidence="2">Belongs to the EF-Ts family.</text>
</comment>
<keyword id="KW-0002">3D-structure</keyword>
<keyword id="KW-0025">Alternative splicing</keyword>
<keyword id="KW-0122">Cardiomyopathy</keyword>
<keyword id="KW-0225">Disease variant</keyword>
<keyword id="KW-0251">Elongation factor</keyword>
<keyword id="KW-0496">Mitochondrion</keyword>
<keyword id="KW-0597">Phosphoprotein</keyword>
<keyword id="KW-1274">Primary mitochondrial disease</keyword>
<keyword id="KW-0648">Protein biosynthesis</keyword>
<keyword id="KW-1267">Proteomics identification</keyword>
<keyword id="KW-1185">Reference proteome</keyword>
<keyword id="KW-0809">Transit peptide</keyword>
<accession>P43897</accession>
<accession>B4E391</accession>
<accession>F5H2T7</accession>
<accession>Q561V7</accession>
<accession>Q8TBC2</accession>
<accession>Q9UQK0</accession>
<evidence type="ECO:0000250" key="1">
    <source>
        <dbReference type="UniProtKB" id="Q9CZR8"/>
    </source>
</evidence>
<evidence type="ECO:0000255" key="2">
    <source>
        <dbReference type="HAMAP-Rule" id="MF_03135"/>
    </source>
</evidence>
<evidence type="ECO:0000269" key="3">
    <source>
    </source>
</evidence>
<evidence type="ECO:0000269" key="4">
    <source>
    </source>
</evidence>
<evidence type="ECO:0000269" key="5">
    <source>
    </source>
</evidence>
<evidence type="ECO:0000303" key="6">
    <source>
    </source>
</evidence>
<evidence type="ECO:0000303" key="7">
    <source>
    </source>
</evidence>
<evidence type="ECO:0000305" key="8"/>
<evidence type="ECO:0007744" key="9">
    <source>
    </source>
</evidence>
<evidence type="ECO:0007744" key="10">
    <source>
    </source>
</evidence>
<evidence type="ECO:0007744" key="11">
    <source>
    </source>
</evidence>
<evidence type="ECO:0007829" key="12">
    <source>
        <dbReference type="PDB" id="2CP9"/>
    </source>
</evidence>
<protein>
    <recommendedName>
        <fullName evidence="2">Elongation factor Ts, mitochondrial</fullName>
        <shortName evidence="2">EF-Ts</shortName>
        <shortName evidence="2">EF-TsMt</shortName>
    </recommendedName>
</protein>
<reference key="1">
    <citation type="submission" date="1998-12" db="EMBL/GenBank/DDBJ databases">
        <title>Expression of human mitochondrial translational elongation factor Ts.</title>
        <authorList>
            <person name="Ma L."/>
            <person name="Ma M."/>
            <person name="Spremulli L.L."/>
        </authorList>
    </citation>
    <scope>NUCLEOTIDE SEQUENCE [MRNA] (ISOFORM 1)</scope>
    <source>
        <tissue>Liver</tissue>
    </source>
</reference>
<reference key="2">
    <citation type="journal article" date="2004" name="Nat. Genet.">
        <title>Complete sequencing and characterization of 21,243 full-length human cDNAs.</title>
        <authorList>
            <person name="Ota T."/>
            <person name="Suzuki Y."/>
            <person name="Nishikawa T."/>
            <person name="Otsuki T."/>
            <person name="Sugiyama T."/>
            <person name="Irie R."/>
            <person name="Wakamatsu A."/>
            <person name="Hayashi K."/>
            <person name="Sato H."/>
            <person name="Nagai K."/>
            <person name="Kimura K."/>
            <person name="Makita H."/>
            <person name="Sekine M."/>
            <person name="Obayashi M."/>
            <person name="Nishi T."/>
            <person name="Shibahara T."/>
            <person name="Tanaka T."/>
            <person name="Ishii S."/>
            <person name="Yamamoto J."/>
            <person name="Saito K."/>
            <person name="Kawai Y."/>
            <person name="Isono Y."/>
            <person name="Nakamura Y."/>
            <person name="Nagahari K."/>
            <person name="Murakami K."/>
            <person name="Yasuda T."/>
            <person name="Iwayanagi T."/>
            <person name="Wagatsuma M."/>
            <person name="Shiratori A."/>
            <person name="Sudo H."/>
            <person name="Hosoiri T."/>
            <person name="Kaku Y."/>
            <person name="Kodaira H."/>
            <person name="Kondo H."/>
            <person name="Sugawara M."/>
            <person name="Takahashi M."/>
            <person name="Kanda K."/>
            <person name="Yokoi T."/>
            <person name="Furuya T."/>
            <person name="Kikkawa E."/>
            <person name="Omura Y."/>
            <person name="Abe K."/>
            <person name="Kamihara K."/>
            <person name="Katsuta N."/>
            <person name="Sato K."/>
            <person name="Tanikawa M."/>
            <person name="Yamazaki M."/>
            <person name="Ninomiya K."/>
            <person name="Ishibashi T."/>
            <person name="Yamashita H."/>
            <person name="Murakawa K."/>
            <person name="Fujimori K."/>
            <person name="Tanai H."/>
            <person name="Kimata M."/>
            <person name="Watanabe M."/>
            <person name="Hiraoka S."/>
            <person name="Chiba Y."/>
            <person name="Ishida S."/>
            <person name="Ono Y."/>
            <person name="Takiguchi S."/>
            <person name="Watanabe S."/>
            <person name="Yosida M."/>
            <person name="Hotuta T."/>
            <person name="Kusano J."/>
            <person name="Kanehori K."/>
            <person name="Takahashi-Fujii A."/>
            <person name="Hara H."/>
            <person name="Tanase T.-O."/>
            <person name="Nomura Y."/>
            <person name="Togiya S."/>
            <person name="Komai F."/>
            <person name="Hara R."/>
            <person name="Takeuchi K."/>
            <person name="Arita M."/>
            <person name="Imose N."/>
            <person name="Musashino K."/>
            <person name="Yuuki H."/>
            <person name="Oshima A."/>
            <person name="Sasaki N."/>
            <person name="Aotsuka S."/>
            <person name="Yoshikawa Y."/>
            <person name="Matsunawa H."/>
            <person name="Ichihara T."/>
            <person name="Shiohata N."/>
            <person name="Sano S."/>
            <person name="Moriya S."/>
            <person name="Momiyama H."/>
            <person name="Satoh N."/>
            <person name="Takami S."/>
            <person name="Terashima Y."/>
            <person name="Suzuki O."/>
            <person name="Nakagawa S."/>
            <person name="Senoh A."/>
            <person name="Mizoguchi H."/>
            <person name="Goto Y."/>
            <person name="Shimizu F."/>
            <person name="Wakebe H."/>
            <person name="Hishigaki H."/>
            <person name="Watanabe T."/>
            <person name="Sugiyama A."/>
            <person name="Takemoto M."/>
            <person name="Kawakami B."/>
            <person name="Yamazaki M."/>
            <person name="Watanabe K."/>
            <person name="Kumagai A."/>
            <person name="Itakura S."/>
            <person name="Fukuzumi Y."/>
            <person name="Fujimori Y."/>
            <person name="Komiyama M."/>
            <person name="Tashiro H."/>
            <person name="Tanigami A."/>
            <person name="Fujiwara T."/>
            <person name="Ono T."/>
            <person name="Yamada K."/>
            <person name="Fujii Y."/>
            <person name="Ozaki K."/>
            <person name="Hirao M."/>
            <person name="Ohmori Y."/>
            <person name="Kawabata A."/>
            <person name="Hikiji T."/>
            <person name="Kobatake N."/>
            <person name="Inagaki H."/>
            <person name="Ikema Y."/>
            <person name="Okamoto S."/>
            <person name="Okitani R."/>
            <person name="Kawakami T."/>
            <person name="Noguchi S."/>
            <person name="Itoh T."/>
            <person name="Shigeta K."/>
            <person name="Senba T."/>
            <person name="Matsumura K."/>
            <person name="Nakajima Y."/>
            <person name="Mizuno T."/>
            <person name="Morinaga M."/>
            <person name="Sasaki M."/>
            <person name="Togashi T."/>
            <person name="Oyama M."/>
            <person name="Hata H."/>
            <person name="Watanabe M."/>
            <person name="Komatsu T."/>
            <person name="Mizushima-Sugano J."/>
            <person name="Satoh T."/>
            <person name="Shirai Y."/>
            <person name="Takahashi Y."/>
            <person name="Nakagawa K."/>
            <person name="Okumura K."/>
            <person name="Nagase T."/>
            <person name="Nomura N."/>
            <person name="Kikuchi H."/>
            <person name="Masuho Y."/>
            <person name="Yamashita R."/>
            <person name="Nakai K."/>
            <person name="Yada T."/>
            <person name="Nakamura Y."/>
            <person name="Ohara O."/>
            <person name="Isogai T."/>
            <person name="Sugano S."/>
        </authorList>
    </citation>
    <scope>NUCLEOTIDE SEQUENCE [LARGE SCALE MRNA] (ISOFORMS 3 AND 4)</scope>
    <source>
        <tissue>Corpus callosum</tissue>
        <tissue>Uterus</tissue>
    </source>
</reference>
<reference key="3">
    <citation type="journal article" date="2006" name="Nature">
        <title>The finished DNA sequence of human chromosome 12.</title>
        <authorList>
            <person name="Scherer S.E."/>
            <person name="Muzny D.M."/>
            <person name="Buhay C.J."/>
            <person name="Chen R."/>
            <person name="Cree A."/>
            <person name="Ding Y."/>
            <person name="Dugan-Rocha S."/>
            <person name="Gill R."/>
            <person name="Gunaratne P."/>
            <person name="Harris R.A."/>
            <person name="Hawes A.C."/>
            <person name="Hernandez J."/>
            <person name="Hodgson A.V."/>
            <person name="Hume J."/>
            <person name="Jackson A."/>
            <person name="Khan Z.M."/>
            <person name="Kovar-Smith C."/>
            <person name="Lewis L.R."/>
            <person name="Lozado R.J."/>
            <person name="Metzker M.L."/>
            <person name="Milosavljevic A."/>
            <person name="Miner G.R."/>
            <person name="Montgomery K.T."/>
            <person name="Morgan M.B."/>
            <person name="Nazareth L.V."/>
            <person name="Scott G."/>
            <person name="Sodergren E."/>
            <person name="Song X.-Z."/>
            <person name="Steffen D."/>
            <person name="Lovering R.C."/>
            <person name="Wheeler D.A."/>
            <person name="Worley K.C."/>
            <person name="Yuan Y."/>
            <person name="Zhang Z."/>
            <person name="Adams C.Q."/>
            <person name="Ansari-Lari M.A."/>
            <person name="Ayele M."/>
            <person name="Brown M.J."/>
            <person name="Chen G."/>
            <person name="Chen Z."/>
            <person name="Clerc-Blankenburg K.P."/>
            <person name="Davis C."/>
            <person name="Delgado O."/>
            <person name="Dinh H.H."/>
            <person name="Draper H."/>
            <person name="Gonzalez-Garay M.L."/>
            <person name="Havlak P."/>
            <person name="Jackson L.R."/>
            <person name="Jacob L.S."/>
            <person name="Kelly S.H."/>
            <person name="Li L."/>
            <person name="Li Z."/>
            <person name="Liu J."/>
            <person name="Liu W."/>
            <person name="Lu J."/>
            <person name="Maheshwari M."/>
            <person name="Nguyen B.-V."/>
            <person name="Okwuonu G.O."/>
            <person name="Pasternak S."/>
            <person name="Perez L.M."/>
            <person name="Plopper F.J.H."/>
            <person name="Santibanez J."/>
            <person name="Shen H."/>
            <person name="Tabor P.E."/>
            <person name="Verduzco D."/>
            <person name="Waldron L."/>
            <person name="Wang Q."/>
            <person name="Williams G.A."/>
            <person name="Zhang J."/>
            <person name="Zhou J."/>
            <person name="Allen C.C."/>
            <person name="Amin A.G."/>
            <person name="Anyalebechi V."/>
            <person name="Bailey M."/>
            <person name="Barbaria J.A."/>
            <person name="Bimage K.E."/>
            <person name="Bryant N.P."/>
            <person name="Burch P.E."/>
            <person name="Burkett C.E."/>
            <person name="Burrell K.L."/>
            <person name="Calderon E."/>
            <person name="Cardenas V."/>
            <person name="Carter K."/>
            <person name="Casias K."/>
            <person name="Cavazos I."/>
            <person name="Cavazos S.R."/>
            <person name="Ceasar H."/>
            <person name="Chacko J."/>
            <person name="Chan S.N."/>
            <person name="Chavez D."/>
            <person name="Christopoulos C."/>
            <person name="Chu J."/>
            <person name="Cockrell R."/>
            <person name="Cox C.D."/>
            <person name="Dang M."/>
            <person name="Dathorne S.R."/>
            <person name="David R."/>
            <person name="Davis C.M."/>
            <person name="Davy-Carroll L."/>
            <person name="Deshazo D.R."/>
            <person name="Donlin J.E."/>
            <person name="D'Souza L."/>
            <person name="Eaves K.A."/>
            <person name="Egan A."/>
            <person name="Emery-Cohen A.J."/>
            <person name="Escotto M."/>
            <person name="Flagg N."/>
            <person name="Forbes L.D."/>
            <person name="Gabisi A.M."/>
            <person name="Garza M."/>
            <person name="Hamilton C."/>
            <person name="Henderson N."/>
            <person name="Hernandez O."/>
            <person name="Hines S."/>
            <person name="Hogues M.E."/>
            <person name="Huang M."/>
            <person name="Idlebird D.G."/>
            <person name="Johnson R."/>
            <person name="Jolivet A."/>
            <person name="Jones S."/>
            <person name="Kagan R."/>
            <person name="King L.M."/>
            <person name="Leal B."/>
            <person name="Lebow H."/>
            <person name="Lee S."/>
            <person name="LeVan J.M."/>
            <person name="Lewis L.C."/>
            <person name="London P."/>
            <person name="Lorensuhewa L.M."/>
            <person name="Loulseged H."/>
            <person name="Lovett D.A."/>
            <person name="Lucier A."/>
            <person name="Lucier R.L."/>
            <person name="Ma J."/>
            <person name="Madu R.C."/>
            <person name="Mapua P."/>
            <person name="Martindale A.D."/>
            <person name="Martinez E."/>
            <person name="Massey E."/>
            <person name="Mawhiney S."/>
            <person name="Meador M.G."/>
            <person name="Mendez S."/>
            <person name="Mercado C."/>
            <person name="Mercado I.C."/>
            <person name="Merritt C.E."/>
            <person name="Miner Z.L."/>
            <person name="Minja E."/>
            <person name="Mitchell T."/>
            <person name="Mohabbat F."/>
            <person name="Mohabbat K."/>
            <person name="Montgomery B."/>
            <person name="Moore N."/>
            <person name="Morris S."/>
            <person name="Munidasa M."/>
            <person name="Ngo R.N."/>
            <person name="Nguyen N.B."/>
            <person name="Nickerson E."/>
            <person name="Nwaokelemeh O.O."/>
            <person name="Nwokenkwo S."/>
            <person name="Obregon M."/>
            <person name="Oguh M."/>
            <person name="Oragunye N."/>
            <person name="Oviedo R.J."/>
            <person name="Parish B.J."/>
            <person name="Parker D.N."/>
            <person name="Parrish J."/>
            <person name="Parks K.L."/>
            <person name="Paul H.A."/>
            <person name="Payton B.A."/>
            <person name="Perez A."/>
            <person name="Perrin W."/>
            <person name="Pickens A."/>
            <person name="Primus E.L."/>
            <person name="Pu L.-L."/>
            <person name="Puazo M."/>
            <person name="Quiles M.M."/>
            <person name="Quiroz J.B."/>
            <person name="Rabata D."/>
            <person name="Reeves K."/>
            <person name="Ruiz S.J."/>
            <person name="Shao H."/>
            <person name="Sisson I."/>
            <person name="Sonaike T."/>
            <person name="Sorelle R.P."/>
            <person name="Sutton A.E."/>
            <person name="Svatek A.F."/>
            <person name="Svetz L.A."/>
            <person name="Tamerisa K.S."/>
            <person name="Taylor T.R."/>
            <person name="Teague B."/>
            <person name="Thomas N."/>
            <person name="Thorn R.D."/>
            <person name="Trejos Z.Y."/>
            <person name="Trevino B.K."/>
            <person name="Ukegbu O.N."/>
            <person name="Urban J.B."/>
            <person name="Vasquez L.I."/>
            <person name="Vera V.A."/>
            <person name="Villasana D.M."/>
            <person name="Wang L."/>
            <person name="Ward-Moore S."/>
            <person name="Warren J.T."/>
            <person name="Wei X."/>
            <person name="White F."/>
            <person name="Williamson A.L."/>
            <person name="Wleczyk R."/>
            <person name="Wooden H.S."/>
            <person name="Wooden S.H."/>
            <person name="Yen J."/>
            <person name="Yoon L."/>
            <person name="Yoon V."/>
            <person name="Zorrilla S.E."/>
            <person name="Nelson D."/>
            <person name="Kucherlapati R."/>
            <person name="Weinstock G."/>
            <person name="Gibbs R.A."/>
        </authorList>
    </citation>
    <scope>NUCLEOTIDE SEQUENCE [LARGE SCALE GENOMIC DNA]</scope>
</reference>
<reference key="4">
    <citation type="submission" date="2005-07" db="EMBL/GenBank/DDBJ databases">
        <authorList>
            <person name="Mural R.J."/>
            <person name="Istrail S."/>
            <person name="Sutton G."/>
            <person name="Florea L."/>
            <person name="Halpern A.L."/>
            <person name="Mobarry C.M."/>
            <person name="Lippert R."/>
            <person name="Walenz B."/>
            <person name="Shatkay H."/>
            <person name="Dew I."/>
            <person name="Miller J.R."/>
            <person name="Flanigan M.J."/>
            <person name="Edwards N.J."/>
            <person name="Bolanos R."/>
            <person name="Fasulo D."/>
            <person name="Halldorsson B.V."/>
            <person name="Hannenhalli S."/>
            <person name="Turner R."/>
            <person name="Yooseph S."/>
            <person name="Lu F."/>
            <person name="Nusskern D.R."/>
            <person name="Shue B.C."/>
            <person name="Zheng X.H."/>
            <person name="Zhong F."/>
            <person name="Delcher A.L."/>
            <person name="Huson D.H."/>
            <person name="Kravitz S.A."/>
            <person name="Mouchard L."/>
            <person name="Reinert K."/>
            <person name="Remington K.A."/>
            <person name="Clark A.G."/>
            <person name="Waterman M.S."/>
            <person name="Eichler E.E."/>
            <person name="Adams M.D."/>
            <person name="Hunkapiller M.W."/>
            <person name="Myers E.W."/>
            <person name="Venter J.C."/>
        </authorList>
    </citation>
    <scope>NUCLEOTIDE SEQUENCE [LARGE SCALE GENOMIC DNA]</scope>
</reference>
<reference key="5">
    <citation type="journal article" date="2004" name="Genome Res.">
        <title>The status, quality, and expansion of the NIH full-length cDNA project: the Mammalian Gene Collection (MGC).</title>
        <authorList>
            <consortium name="The MGC Project Team"/>
        </authorList>
    </citation>
    <scope>NUCLEOTIDE SEQUENCE [LARGE SCALE MRNA] (ISOFORMS 1 AND 2)</scope>
    <source>
        <tissue>Bone marrow</tissue>
        <tissue>Brain</tissue>
    </source>
</reference>
<reference key="6">
    <citation type="journal article" date="1995" name="J. Biol. Chem.">
        <title>Cloning and expression of mitochondrial translational elongation factor Ts from bovine and human liver.</title>
        <authorList>
            <person name="Xin H."/>
            <person name="Woriax V."/>
            <person name="Burkhart W."/>
            <person name="Spremulli L.L."/>
        </authorList>
    </citation>
    <scope>NUCLEOTIDE SEQUENCE [MRNA] OF 32-325 (ISOFORM 1)</scope>
    <source>
        <tissue>Liver</tissue>
    </source>
</reference>
<reference key="7">
    <citation type="journal article" date="2009" name="Sci. Signal.">
        <title>Quantitative phosphoproteomic analysis of T cell receptor signaling reveals system-wide modulation of protein-protein interactions.</title>
        <authorList>
            <person name="Mayya V."/>
            <person name="Lundgren D.H."/>
            <person name="Hwang S.-I."/>
            <person name="Rezaul K."/>
            <person name="Wu L."/>
            <person name="Eng J.K."/>
            <person name="Rodionov V."/>
            <person name="Han D.K."/>
        </authorList>
    </citation>
    <scope>PHOSPHORYLATION [LARGE SCALE ANALYSIS] AT THR-324</scope>
    <scope>IDENTIFICATION BY MASS SPECTROMETRY [LARGE SCALE ANALYSIS]</scope>
    <source>
        <tissue>Leukemic T-cell</tissue>
    </source>
</reference>
<reference key="8">
    <citation type="journal article" date="2011" name="BMC Syst. Biol.">
        <title>Initial characterization of the human central proteome.</title>
        <authorList>
            <person name="Burkard T.R."/>
            <person name="Planyavsky M."/>
            <person name="Kaupe I."/>
            <person name="Breitwieser F.P."/>
            <person name="Buerckstuemmer T."/>
            <person name="Bennett K.L."/>
            <person name="Superti-Furga G."/>
            <person name="Colinge J."/>
        </authorList>
    </citation>
    <scope>IDENTIFICATION BY MASS SPECTROMETRY [LARGE SCALE ANALYSIS]</scope>
</reference>
<reference key="9">
    <citation type="journal article" date="2013" name="J. Proteome Res.">
        <title>Toward a comprehensive characterization of a human cancer cell phosphoproteome.</title>
        <authorList>
            <person name="Zhou H."/>
            <person name="Di Palma S."/>
            <person name="Preisinger C."/>
            <person name="Peng M."/>
            <person name="Polat A.N."/>
            <person name="Heck A.J."/>
            <person name="Mohammed S."/>
        </authorList>
    </citation>
    <scope>PHOSPHORYLATION [LARGE SCALE ANALYSIS] AT SER-270</scope>
    <scope>IDENTIFICATION BY MASS SPECTROMETRY [LARGE SCALE ANALYSIS]</scope>
    <source>
        <tissue>Erythroleukemia</tissue>
    </source>
</reference>
<reference key="10">
    <citation type="journal article" date="2014" name="J. Proteomics">
        <title>An enzyme assisted RP-RPLC approach for in-depth analysis of human liver phosphoproteome.</title>
        <authorList>
            <person name="Bian Y."/>
            <person name="Song C."/>
            <person name="Cheng K."/>
            <person name="Dong M."/>
            <person name="Wang F."/>
            <person name="Huang J."/>
            <person name="Sun D."/>
            <person name="Wang L."/>
            <person name="Ye M."/>
            <person name="Zou H."/>
        </authorList>
    </citation>
    <scope>PHOSPHORYLATION [LARGE SCALE ANALYSIS] AT SER-270</scope>
    <scope>IDENTIFICATION BY MASS SPECTROMETRY [LARGE SCALE ANALYSIS]</scope>
    <source>
        <tissue>Liver</tissue>
    </source>
</reference>
<reference key="11">
    <citation type="journal article" date="2015" name="Proteomics">
        <title>N-terminome analysis of the human mitochondrial proteome.</title>
        <authorList>
            <person name="Vaca Jacome A.S."/>
            <person name="Rabilloud T."/>
            <person name="Schaeffer-Reiss C."/>
            <person name="Rompais M."/>
            <person name="Ayoub D."/>
            <person name="Lane L."/>
            <person name="Bairoch A."/>
            <person name="Van Dorsselaer A."/>
            <person name="Carapito C."/>
        </authorList>
    </citation>
    <scope>IDENTIFICATION BY MASS SPECTROMETRY [LARGE SCALE ANALYSIS]</scope>
</reference>
<reference key="12">
    <citation type="submission" date="2005-11" db="PDB data bank">
        <title>Solution structure of RSGI RUH-042, a UBA domain from human mitochondrial elongation factor TS.</title>
        <authorList>
            <consortium name="RIKEN structural genomics initiative (RSGI)"/>
        </authorList>
    </citation>
    <scope>STRUCTURE BY NMR OF 43-95</scope>
</reference>
<reference key="13">
    <citation type="journal article" date="2006" name="Am. J. Hum. Genet.">
        <title>Distinct clinical phenotypes associated with a mutation in the mitochondrial translation elongation factor EFTs.</title>
        <authorList>
            <person name="Smeitink J.A.M."/>
            <person name="Elpeleg O."/>
            <person name="Antonicka H."/>
            <person name="Diepstra H."/>
            <person name="Saada A."/>
            <person name="Smits P."/>
            <person name="Sasarman F."/>
            <person name="Vriend G."/>
            <person name="Jacob-Hirsch J."/>
            <person name="Shaag A."/>
            <person name="Rechavi G."/>
            <person name="Welling B."/>
            <person name="Horst J."/>
            <person name="Rodenburg R.J."/>
            <person name="van den Heuvel B."/>
            <person name="Shoubridge E.A."/>
        </authorList>
    </citation>
    <scope>VARIANT COXPD3 TRP-312</scope>
    <scope>INVOLVEMENT IN COXPD3</scope>
</reference>
<reference key="14">
    <citation type="journal article" date="2012" name="J. Med. Genet.">
        <title>Genomic analysis of mitochondrial diseases in a consanguineous population reveals novel candidate disease genes.</title>
        <authorList>
            <person name="Shamseldin H.E."/>
            <person name="Alshammari M."/>
            <person name="Al-Sheddi T."/>
            <person name="Salih M.A."/>
            <person name="Alkhalidi H."/>
            <person name="Kentab A."/>
            <person name="Repetto G.M."/>
            <person name="Hashem M."/>
            <person name="Alkuraya F.S."/>
        </authorList>
    </citation>
    <scope>VARIANT COXPD3 TRP-312</scope>
</reference>
<reference key="15">
    <citation type="journal article" date="2016" name="Eur. J. Hum. Genet.">
        <title>Molecular-genetic characterization and rescue of a TSFM mutation causing childhood-onset ataxia and nonobstructive cardiomyopathy.</title>
        <authorList>
            <person name="Emperador S."/>
            <person name="Bayona-Bafaluy M.P."/>
            <person name="Fernandez-Marmiesse A."/>
            <person name="Pineda M."/>
            <person name="Felgueroso B."/>
            <person name="Lopez-Gallardo E."/>
            <person name="Artuch R."/>
            <person name="Roca I."/>
            <person name="Ruiz-Pesini E."/>
            <person name="Couce M.L."/>
            <person name="Montoya J."/>
        </authorList>
    </citation>
    <scope>VARIANT COXPD3 SER-240</scope>
    <scope>CHARACTERIZATION OF VARIANT COXPD3 SER-240</scope>
    <scope>FUNCTION</scope>
</reference>
<organism>
    <name type="scientific">Homo sapiens</name>
    <name type="common">Human</name>
    <dbReference type="NCBI Taxonomy" id="9606"/>
    <lineage>
        <taxon>Eukaryota</taxon>
        <taxon>Metazoa</taxon>
        <taxon>Chordata</taxon>
        <taxon>Craniata</taxon>
        <taxon>Vertebrata</taxon>
        <taxon>Euteleostomi</taxon>
        <taxon>Mammalia</taxon>
        <taxon>Eutheria</taxon>
        <taxon>Euarchontoglires</taxon>
        <taxon>Primates</taxon>
        <taxon>Haplorrhini</taxon>
        <taxon>Catarrhini</taxon>
        <taxon>Hominidae</taxon>
        <taxon>Homo</taxon>
    </lineage>
</organism>
<feature type="transit peptide" description="Mitochondrion" evidence="2">
    <location>
        <begin position="1"/>
        <end position="45"/>
    </location>
</feature>
<feature type="chain" id="PRO_0000007468" description="Elongation factor Ts, mitochondrial">
    <location>
        <begin position="46"/>
        <end position="325"/>
    </location>
</feature>
<feature type="modified residue" description="N6-succinyllysine" evidence="1">
    <location>
        <position position="76"/>
    </location>
</feature>
<feature type="modified residue" description="N6-succinyllysine" evidence="1">
    <location>
        <position position="133"/>
    </location>
</feature>
<feature type="modified residue" description="N6-succinyllysine" evidence="1">
    <location>
        <position position="192"/>
    </location>
</feature>
<feature type="modified residue" description="Phosphoserine" evidence="10 11">
    <location>
        <position position="270"/>
    </location>
</feature>
<feature type="modified residue" description="Phosphothreonine" evidence="9">
    <location>
        <position position="324"/>
    </location>
</feature>
<feature type="splice variant" id="VSP_001364" description="In isoform 2." evidence="7">
    <original>K</original>
    <variation>KVQWLTPVNLALWEAEAGGSLE</variation>
    <location>
        <position position="161"/>
    </location>
</feature>
<feature type="splice variant" id="VSP_043517" description="In isoform 3." evidence="6">
    <original>GFLNSS</original>
    <variation>ENWEKT</variation>
    <location>
        <begin position="162"/>
        <end position="167"/>
    </location>
</feature>
<feature type="splice variant" id="VSP_043518" description="In isoform 3." evidence="6">
    <location>
        <begin position="168"/>
        <end position="325"/>
    </location>
</feature>
<feature type="splice variant" id="VSP_045283" description="In isoform 4." evidence="6">
    <original>KLGENMILKRAAWVKVPSGFYVGS</original>
    <variation>LPFQIGAVSELQLPESNFLQNTSS</variation>
    <location>
        <begin position="192"/>
        <end position="215"/>
    </location>
</feature>
<feature type="splice variant" id="VSP_045284" description="In isoform 4." evidence="6">
    <location>
        <begin position="216"/>
        <end position="325"/>
    </location>
</feature>
<feature type="sequence variant" id="VAR_077697" description="In COXPD3; decreased protein abundance; decreased mitochondrial translation products; patient fibroblast phenotype can be rescued by coexpression with wild-type TSFM; dbSNP:rs750799705." evidence="5">
    <original>C</original>
    <variation>S</variation>
    <location>
        <position position="240"/>
    </location>
</feature>
<feature type="sequence variant" id="VAR_068973" description="In COXPD3; dbSNP:rs121909485." evidence="3 4">
    <original>R</original>
    <variation>W</variation>
    <location>
        <position position="312"/>
    </location>
</feature>
<feature type="sequence conflict" description="In Ref. 6; AAC37577." evidence="8" ref="6">
    <original>HTF</original>
    <variation>ARV</variation>
    <location>
        <begin position="32"/>
        <end position="34"/>
    </location>
</feature>
<feature type="sequence conflict" description="In Ref. 5; AAH93068." evidence="8" ref="5">
    <original>N</original>
    <variation>T</variation>
    <location>
        <position position="196"/>
    </location>
</feature>
<feature type="helix" evidence="12">
    <location>
        <begin position="48"/>
        <end position="57"/>
    </location>
</feature>
<feature type="helix" evidence="12">
    <location>
        <begin position="61"/>
        <end position="71"/>
    </location>
</feature>
<feature type="helix" evidence="12">
    <location>
        <begin position="75"/>
        <end position="89"/>
    </location>
</feature>
<feature type="strand" evidence="12">
    <location>
        <begin position="92"/>
        <end position="94"/>
    </location>
</feature>
<gene>
    <name evidence="2" type="primary">TSFM</name>
</gene>
<proteinExistence type="evidence at protein level"/>
<sequence length="325" mass="35391">MSLLRSLRVFLVARTGSYPAGSLLRQSPQPRHTFYAGPRLSASASSKELLMKLRRKTGYSFVNCKKALETCGGDLKQAEIWLHKEAQKEGWSKAAKLQGRKTKEGLIGLLQEGNTTVLVEVNCETDFVSRNLKFQLLVQQVALGTMMHCQTLKDQPSAYSKGFLNSSELSGLPAGPDREGSLKDQLALAIGKLGENMILKRAAWVKVPSGFYVGSYVHGAMQSPSLHKLVLGKYGALVICETSEQKTNLEDVGRRLGQHVVGMAPLSVGSLDDEPGGEAETKMLSQPYLLDPSITLGQYVQPQGVSVVDFVRFECGEGEEAAETE</sequence>